<keyword id="KW-0028">Amino-acid biosynthesis</keyword>
<keyword id="KW-0055">Arginine biosynthesis</keyword>
<keyword id="KW-0067">ATP-binding</keyword>
<keyword id="KW-0963">Cytoplasm</keyword>
<keyword id="KW-0436">Ligase</keyword>
<keyword id="KW-0547">Nucleotide-binding</keyword>
<keyword id="KW-1185">Reference proteome</keyword>
<evidence type="ECO:0000255" key="1">
    <source>
        <dbReference type="HAMAP-Rule" id="MF_00005"/>
    </source>
</evidence>
<sequence>MGRAKKVVLAYSGGVDTSVCIPYLKHEWGVEEVITFAADLGQGDELDPIRLKALDAGASQSLVGDLIEPFVEQFALPAIRANALYEGRYPLSTALARPLIARQLVEVAREVGADAVAHGCTGKGNDQVRFDLAIAALAPDLKVLTPAREWSMSREEAIAYGERCGIPAPVSKKSPYSIDLNLLGRSIEAGPLEDLMVAPPEEVFAMTSSIDAAPSQAQDIEISFEAGNPVAIDGVRLDSVGLIKEANRLAGRHGFGRLDIIENRVVGIKSREIYETPGLLLLIRAHQELESLTLAADVLRMKRQLEMQWAELVYQGLWFSPLKDALDGFMDRTQTYVNGLVRIRLQKGNAMVIGRSSDTNSLYISEMATYGSEDNFDHRAAEGFIYIWGLPSRLWAAARRG</sequence>
<dbReference type="EC" id="6.3.4.5" evidence="1"/>
<dbReference type="EMBL" id="BX548175">
    <property type="protein sequence ID" value="CAE22435.1"/>
    <property type="molecule type" value="Genomic_DNA"/>
</dbReference>
<dbReference type="RefSeq" id="WP_011131625.1">
    <property type="nucleotide sequence ID" value="NC_005071.1"/>
</dbReference>
<dbReference type="SMR" id="Q7V3S9"/>
<dbReference type="KEGG" id="pmt:PMT_2261"/>
<dbReference type="eggNOG" id="COG0137">
    <property type="taxonomic scope" value="Bacteria"/>
</dbReference>
<dbReference type="HOGENOM" id="CLU_032784_4_2_3"/>
<dbReference type="OrthoDB" id="9801641at2"/>
<dbReference type="UniPathway" id="UPA00068">
    <property type="reaction ID" value="UER00113"/>
</dbReference>
<dbReference type="Proteomes" id="UP000001423">
    <property type="component" value="Chromosome"/>
</dbReference>
<dbReference type="GO" id="GO:0005737">
    <property type="term" value="C:cytoplasm"/>
    <property type="evidence" value="ECO:0007669"/>
    <property type="project" value="UniProtKB-SubCell"/>
</dbReference>
<dbReference type="GO" id="GO:0004055">
    <property type="term" value="F:argininosuccinate synthase activity"/>
    <property type="evidence" value="ECO:0007669"/>
    <property type="project" value="UniProtKB-UniRule"/>
</dbReference>
<dbReference type="GO" id="GO:0005524">
    <property type="term" value="F:ATP binding"/>
    <property type="evidence" value="ECO:0007669"/>
    <property type="project" value="UniProtKB-UniRule"/>
</dbReference>
<dbReference type="GO" id="GO:0000053">
    <property type="term" value="P:argininosuccinate metabolic process"/>
    <property type="evidence" value="ECO:0007669"/>
    <property type="project" value="TreeGrafter"/>
</dbReference>
<dbReference type="GO" id="GO:0006526">
    <property type="term" value="P:L-arginine biosynthetic process"/>
    <property type="evidence" value="ECO:0007669"/>
    <property type="project" value="UniProtKB-UniRule"/>
</dbReference>
<dbReference type="GO" id="GO:0000050">
    <property type="term" value="P:urea cycle"/>
    <property type="evidence" value="ECO:0007669"/>
    <property type="project" value="TreeGrafter"/>
</dbReference>
<dbReference type="CDD" id="cd01999">
    <property type="entry name" value="ASS"/>
    <property type="match status" value="1"/>
</dbReference>
<dbReference type="FunFam" id="3.40.50.620:FF:000019">
    <property type="entry name" value="Argininosuccinate synthase"/>
    <property type="match status" value="1"/>
</dbReference>
<dbReference type="FunFam" id="3.90.1260.10:FF:000007">
    <property type="entry name" value="Argininosuccinate synthase"/>
    <property type="match status" value="1"/>
</dbReference>
<dbReference type="Gene3D" id="3.90.1260.10">
    <property type="entry name" value="Argininosuccinate synthetase, chain A, domain 2"/>
    <property type="match status" value="1"/>
</dbReference>
<dbReference type="Gene3D" id="3.40.50.620">
    <property type="entry name" value="HUPs"/>
    <property type="match status" value="1"/>
</dbReference>
<dbReference type="Gene3D" id="1.20.5.470">
    <property type="entry name" value="Single helix bin"/>
    <property type="match status" value="1"/>
</dbReference>
<dbReference type="HAMAP" id="MF_00005">
    <property type="entry name" value="Arg_succ_synth_type1"/>
    <property type="match status" value="1"/>
</dbReference>
<dbReference type="InterPro" id="IPR048268">
    <property type="entry name" value="Arginosuc_syn_C"/>
</dbReference>
<dbReference type="InterPro" id="IPR048267">
    <property type="entry name" value="Arginosuc_syn_N"/>
</dbReference>
<dbReference type="InterPro" id="IPR001518">
    <property type="entry name" value="Arginosuc_synth"/>
</dbReference>
<dbReference type="InterPro" id="IPR018223">
    <property type="entry name" value="Arginosuc_synth_CS"/>
</dbReference>
<dbReference type="InterPro" id="IPR023434">
    <property type="entry name" value="Arginosuc_synth_type_1_subfam"/>
</dbReference>
<dbReference type="InterPro" id="IPR024074">
    <property type="entry name" value="AS_cat/multimer_dom_body"/>
</dbReference>
<dbReference type="InterPro" id="IPR014729">
    <property type="entry name" value="Rossmann-like_a/b/a_fold"/>
</dbReference>
<dbReference type="NCBIfam" id="TIGR00032">
    <property type="entry name" value="argG"/>
    <property type="match status" value="1"/>
</dbReference>
<dbReference type="NCBIfam" id="NF001770">
    <property type="entry name" value="PRK00509.1"/>
    <property type="match status" value="1"/>
</dbReference>
<dbReference type="PANTHER" id="PTHR11587">
    <property type="entry name" value="ARGININOSUCCINATE SYNTHASE"/>
    <property type="match status" value="1"/>
</dbReference>
<dbReference type="PANTHER" id="PTHR11587:SF2">
    <property type="entry name" value="ARGININOSUCCINATE SYNTHASE"/>
    <property type="match status" value="1"/>
</dbReference>
<dbReference type="Pfam" id="PF20979">
    <property type="entry name" value="Arginosuc_syn_C"/>
    <property type="match status" value="1"/>
</dbReference>
<dbReference type="Pfam" id="PF00764">
    <property type="entry name" value="Arginosuc_synth"/>
    <property type="match status" value="1"/>
</dbReference>
<dbReference type="SUPFAM" id="SSF52402">
    <property type="entry name" value="Adenine nucleotide alpha hydrolases-like"/>
    <property type="match status" value="1"/>
</dbReference>
<dbReference type="SUPFAM" id="SSF69864">
    <property type="entry name" value="Argininosuccinate synthetase, C-terminal domain"/>
    <property type="match status" value="1"/>
</dbReference>
<dbReference type="PROSITE" id="PS00564">
    <property type="entry name" value="ARGININOSUCCIN_SYN_1"/>
    <property type="match status" value="1"/>
</dbReference>
<dbReference type="PROSITE" id="PS00565">
    <property type="entry name" value="ARGININOSUCCIN_SYN_2"/>
    <property type="match status" value="1"/>
</dbReference>
<name>ASSY_PROMM</name>
<comment type="catalytic activity">
    <reaction evidence="1">
        <text>L-citrulline + L-aspartate + ATP = 2-(N(omega)-L-arginino)succinate + AMP + diphosphate + H(+)</text>
        <dbReference type="Rhea" id="RHEA:10932"/>
        <dbReference type="ChEBI" id="CHEBI:15378"/>
        <dbReference type="ChEBI" id="CHEBI:29991"/>
        <dbReference type="ChEBI" id="CHEBI:30616"/>
        <dbReference type="ChEBI" id="CHEBI:33019"/>
        <dbReference type="ChEBI" id="CHEBI:57472"/>
        <dbReference type="ChEBI" id="CHEBI:57743"/>
        <dbReference type="ChEBI" id="CHEBI:456215"/>
        <dbReference type="EC" id="6.3.4.5"/>
    </reaction>
</comment>
<comment type="pathway">
    <text evidence="1">Amino-acid biosynthesis; L-arginine biosynthesis; L-arginine from L-ornithine and carbamoyl phosphate: step 2/3.</text>
</comment>
<comment type="subunit">
    <text evidence="1">Homotetramer.</text>
</comment>
<comment type="subcellular location">
    <subcellularLocation>
        <location evidence="1">Cytoplasm</location>
    </subcellularLocation>
</comment>
<comment type="similarity">
    <text evidence="1">Belongs to the argininosuccinate synthase family. Type 1 subfamily.</text>
</comment>
<reference key="1">
    <citation type="journal article" date="2003" name="Nature">
        <title>Genome divergence in two Prochlorococcus ecotypes reflects oceanic niche differentiation.</title>
        <authorList>
            <person name="Rocap G."/>
            <person name="Larimer F.W."/>
            <person name="Lamerdin J.E."/>
            <person name="Malfatti S."/>
            <person name="Chain P."/>
            <person name="Ahlgren N.A."/>
            <person name="Arellano A."/>
            <person name="Coleman M."/>
            <person name="Hauser L."/>
            <person name="Hess W.R."/>
            <person name="Johnson Z.I."/>
            <person name="Land M.L."/>
            <person name="Lindell D."/>
            <person name="Post A.F."/>
            <person name="Regala W."/>
            <person name="Shah M."/>
            <person name="Shaw S.L."/>
            <person name="Steglich C."/>
            <person name="Sullivan M.B."/>
            <person name="Ting C.S."/>
            <person name="Tolonen A."/>
            <person name="Webb E.A."/>
            <person name="Zinser E.R."/>
            <person name="Chisholm S.W."/>
        </authorList>
    </citation>
    <scope>NUCLEOTIDE SEQUENCE [LARGE SCALE GENOMIC DNA]</scope>
    <source>
        <strain>MIT 9313</strain>
    </source>
</reference>
<protein>
    <recommendedName>
        <fullName evidence="1">Argininosuccinate synthase</fullName>
        <ecNumber evidence="1">6.3.4.5</ecNumber>
    </recommendedName>
    <alternativeName>
        <fullName evidence="1">Citrulline--aspartate ligase</fullName>
    </alternativeName>
</protein>
<accession>Q7V3S9</accession>
<gene>
    <name evidence="1" type="primary">argG</name>
    <name type="ordered locus">PMT_2261</name>
</gene>
<organism>
    <name type="scientific">Prochlorococcus marinus (strain MIT 9313)</name>
    <dbReference type="NCBI Taxonomy" id="74547"/>
    <lineage>
        <taxon>Bacteria</taxon>
        <taxon>Bacillati</taxon>
        <taxon>Cyanobacteriota</taxon>
        <taxon>Cyanophyceae</taxon>
        <taxon>Synechococcales</taxon>
        <taxon>Prochlorococcaceae</taxon>
        <taxon>Prochlorococcus</taxon>
    </lineage>
</organism>
<proteinExistence type="inferred from homology"/>
<feature type="chain" id="PRO_0000148624" description="Argininosuccinate synthase">
    <location>
        <begin position="1"/>
        <end position="401"/>
    </location>
</feature>
<feature type="binding site" evidence="1">
    <location>
        <begin position="10"/>
        <end position="18"/>
    </location>
    <ligand>
        <name>ATP</name>
        <dbReference type="ChEBI" id="CHEBI:30616"/>
    </ligand>
</feature>
<feature type="binding site" evidence="1">
    <location>
        <position position="38"/>
    </location>
    <ligand>
        <name>ATP</name>
        <dbReference type="ChEBI" id="CHEBI:30616"/>
    </ligand>
</feature>
<feature type="binding site" evidence="1">
    <location>
        <position position="89"/>
    </location>
    <ligand>
        <name>L-citrulline</name>
        <dbReference type="ChEBI" id="CHEBI:57743"/>
    </ligand>
</feature>
<feature type="binding site" evidence="1">
    <location>
        <position position="119"/>
    </location>
    <ligand>
        <name>ATP</name>
        <dbReference type="ChEBI" id="CHEBI:30616"/>
    </ligand>
</feature>
<feature type="binding site" evidence="1">
    <location>
        <position position="121"/>
    </location>
    <ligand>
        <name>L-aspartate</name>
        <dbReference type="ChEBI" id="CHEBI:29991"/>
    </ligand>
</feature>
<feature type="binding site" evidence="1">
    <location>
        <position position="125"/>
    </location>
    <ligand>
        <name>L-aspartate</name>
        <dbReference type="ChEBI" id="CHEBI:29991"/>
    </ligand>
</feature>
<feature type="binding site" evidence="1">
    <location>
        <position position="125"/>
    </location>
    <ligand>
        <name>L-citrulline</name>
        <dbReference type="ChEBI" id="CHEBI:57743"/>
    </ligand>
</feature>
<feature type="binding site" evidence="1">
    <location>
        <position position="126"/>
    </location>
    <ligand>
        <name>L-aspartate</name>
        <dbReference type="ChEBI" id="CHEBI:29991"/>
    </ligand>
</feature>
<feature type="binding site" evidence="1">
    <location>
        <position position="129"/>
    </location>
    <ligand>
        <name>L-citrulline</name>
        <dbReference type="ChEBI" id="CHEBI:57743"/>
    </ligand>
</feature>
<feature type="binding site" evidence="1">
    <location>
        <position position="177"/>
    </location>
    <ligand>
        <name>L-citrulline</name>
        <dbReference type="ChEBI" id="CHEBI:57743"/>
    </ligand>
</feature>
<feature type="binding site" evidence="1">
    <location>
        <position position="186"/>
    </location>
    <ligand>
        <name>L-citrulline</name>
        <dbReference type="ChEBI" id="CHEBI:57743"/>
    </ligand>
</feature>
<feature type="binding site" evidence="1">
    <location>
        <position position="262"/>
    </location>
    <ligand>
        <name>L-citrulline</name>
        <dbReference type="ChEBI" id="CHEBI:57743"/>
    </ligand>
</feature>
<feature type="binding site" evidence="1">
    <location>
        <position position="274"/>
    </location>
    <ligand>
        <name>L-citrulline</name>
        <dbReference type="ChEBI" id="CHEBI:57743"/>
    </ligand>
</feature>